<dbReference type="EC" id="3.1.1.96" evidence="1"/>
<dbReference type="EMBL" id="AP006618">
    <property type="protein sequence ID" value="BAD55651.1"/>
    <property type="molecule type" value="Genomic_DNA"/>
</dbReference>
<dbReference type="RefSeq" id="WP_011207337.1">
    <property type="nucleotide sequence ID" value="NC_006361.1"/>
</dbReference>
<dbReference type="SMR" id="Q5Z1P0"/>
<dbReference type="STRING" id="247156.NFA_8060"/>
<dbReference type="GeneID" id="61131636"/>
<dbReference type="KEGG" id="nfa:NFA_8060"/>
<dbReference type="eggNOG" id="COG1490">
    <property type="taxonomic scope" value="Bacteria"/>
</dbReference>
<dbReference type="HOGENOM" id="CLU_076901_1_2_11"/>
<dbReference type="OrthoDB" id="9801395at2"/>
<dbReference type="Proteomes" id="UP000006820">
    <property type="component" value="Chromosome"/>
</dbReference>
<dbReference type="GO" id="GO:0005737">
    <property type="term" value="C:cytoplasm"/>
    <property type="evidence" value="ECO:0007669"/>
    <property type="project" value="UniProtKB-SubCell"/>
</dbReference>
<dbReference type="GO" id="GO:0051500">
    <property type="term" value="F:D-tyrosyl-tRNA(Tyr) deacylase activity"/>
    <property type="evidence" value="ECO:0007669"/>
    <property type="project" value="TreeGrafter"/>
</dbReference>
<dbReference type="GO" id="GO:0106026">
    <property type="term" value="F:Gly-tRNA(Ala) deacylase activity"/>
    <property type="evidence" value="ECO:0007669"/>
    <property type="project" value="UniProtKB-UniRule"/>
</dbReference>
<dbReference type="GO" id="GO:0043908">
    <property type="term" value="F:Ser(Gly)-tRNA(Ala) hydrolase activity"/>
    <property type="evidence" value="ECO:0007669"/>
    <property type="project" value="UniProtKB-UniRule"/>
</dbReference>
<dbReference type="GO" id="GO:0000049">
    <property type="term" value="F:tRNA binding"/>
    <property type="evidence" value="ECO:0007669"/>
    <property type="project" value="UniProtKB-UniRule"/>
</dbReference>
<dbReference type="GO" id="GO:0019478">
    <property type="term" value="P:D-amino acid catabolic process"/>
    <property type="evidence" value="ECO:0007669"/>
    <property type="project" value="UniProtKB-UniRule"/>
</dbReference>
<dbReference type="CDD" id="cd00563">
    <property type="entry name" value="Dtyr_deacylase"/>
    <property type="match status" value="1"/>
</dbReference>
<dbReference type="FunFam" id="3.50.80.10:FF:000001">
    <property type="entry name" value="D-aminoacyl-tRNA deacylase"/>
    <property type="match status" value="1"/>
</dbReference>
<dbReference type="Gene3D" id="3.50.80.10">
    <property type="entry name" value="D-tyrosyl-tRNA(Tyr) deacylase"/>
    <property type="match status" value="1"/>
</dbReference>
<dbReference type="HAMAP" id="MF_00518">
    <property type="entry name" value="Deacylase_Dtd"/>
    <property type="match status" value="1"/>
</dbReference>
<dbReference type="InterPro" id="IPR003732">
    <property type="entry name" value="Daa-tRNA_deacyls_DTD"/>
</dbReference>
<dbReference type="InterPro" id="IPR023509">
    <property type="entry name" value="DTD-like_sf"/>
</dbReference>
<dbReference type="NCBIfam" id="TIGR00256">
    <property type="entry name" value="D-aminoacyl-tRNA deacylase"/>
    <property type="match status" value="1"/>
</dbReference>
<dbReference type="PANTHER" id="PTHR10472:SF5">
    <property type="entry name" value="D-AMINOACYL-TRNA DEACYLASE 1"/>
    <property type="match status" value="1"/>
</dbReference>
<dbReference type="PANTHER" id="PTHR10472">
    <property type="entry name" value="D-TYROSYL-TRNA TYR DEACYLASE"/>
    <property type="match status" value="1"/>
</dbReference>
<dbReference type="Pfam" id="PF02580">
    <property type="entry name" value="Tyr_Deacylase"/>
    <property type="match status" value="1"/>
</dbReference>
<dbReference type="SUPFAM" id="SSF69500">
    <property type="entry name" value="DTD-like"/>
    <property type="match status" value="1"/>
</dbReference>
<feature type="chain" id="PRO_0000164566" description="D-aminoacyl-tRNA deacylase">
    <location>
        <begin position="1"/>
        <end position="143"/>
    </location>
</feature>
<feature type="short sequence motif" description="Gly-cisPro motif, important for rejection of L-amino acids" evidence="1">
    <location>
        <begin position="135"/>
        <end position="136"/>
    </location>
</feature>
<comment type="function">
    <text evidence="1">An aminoacyl-tRNA editing enzyme that deacylates mischarged D-aminoacyl-tRNAs. Also deacylates mischarged glycyl-tRNA(Ala), protecting cells against glycine mischarging by AlaRS. Acts via tRNA-based rather than protein-based catalysis; rejects L-amino acids rather than detecting D-amino acids in the active site. By recycling D-aminoacyl-tRNA to D-amino acids and free tRNA molecules, this enzyme counteracts the toxicity associated with the formation of D-aminoacyl-tRNA entities in vivo and helps enforce protein L-homochirality.</text>
</comment>
<comment type="catalytic activity">
    <reaction evidence="1">
        <text>glycyl-tRNA(Ala) + H2O = tRNA(Ala) + glycine + H(+)</text>
        <dbReference type="Rhea" id="RHEA:53744"/>
        <dbReference type="Rhea" id="RHEA-COMP:9657"/>
        <dbReference type="Rhea" id="RHEA-COMP:13640"/>
        <dbReference type="ChEBI" id="CHEBI:15377"/>
        <dbReference type="ChEBI" id="CHEBI:15378"/>
        <dbReference type="ChEBI" id="CHEBI:57305"/>
        <dbReference type="ChEBI" id="CHEBI:78442"/>
        <dbReference type="ChEBI" id="CHEBI:78522"/>
        <dbReference type="EC" id="3.1.1.96"/>
    </reaction>
</comment>
<comment type="catalytic activity">
    <reaction evidence="1">
        <text>a D-aminoacyl-tRNA + H2O = a tRNA + a D-alpha-amino acid + H(+)</text>
        <dbReference type="Rhea" id="RHEA:13953"/>
        <dbReference type="Rhea" id="RHEA-COMP:10123"/>
        <dbReference type="Rhea" id="RHEA-COMP:10124"/>
        <dbReference type="ChEBI" id="CHEBI:15377"/>
        <dbReference type="ChEBI" id="CHEBI:15378"/>
        <dbReference type="ChEBI" id="CHEBI:59871"/>
        <dbReference type="ChEBI" id="CHEBI:78442"/>
        <dbReference type="ChEBI" id="CHEBI:79333"/>
        <dbReference type="EC" id="3.1.1.96"/>
    </reaction>
</comment>
<comment type="subunit">
    <text evidence="1">Homodimer.</text>
</comment>
<comment type="subcellular location">
    <subcellularLocation>
        <location evidence="1">Cytoplasm</location>
    </subcellularLocation>
</comment>
<comment type="domain">
    <text evidence="1">A Gly-cisPro motif from one monomer fits into the active site of the other monomer to allow specific chiral rejection of L-amino acids.</text>
</comment>
<comment type="similarity">
    <text evidence="1">Belongs to the DTD family.</text>
</comment>
<name>DTD_NOCFA</name>
<keyword id="KW-0963">Cytoplasm</keyword>
<keyword id="KW-0378">Hydrolase</keyword>
<keyword id="KW-1185">Reference proteome</keyword>
<keyword id="KW-0694">RNA-binding</keyword>
<keyword id="KW-0820">tRNA-binding</keyword>
<sequence length="143" mass="15033">MRVLVQRVTSAQVTVDGEVVGRIEPNPQGLVALVGVTHGDDDATARALADKLWRLRILDGERSAADLGAPILVVSQFTLYADTAKGRRPSWSAAAPGPVAEPLVDAFAATLRELGATVATGRFGAHMHVELTNDGPVTLLLES</sequence>
<reference key="1">
    <citation type="journal article" date="2004" name="Proc. Natl. Acad. Sci. U.S.A.">
        <title>The complete genomic sequence of Nocardia farcinica IFM 10152.</title>
        <authorList>
            <person name="Ishikawa J."/>
            <person name="Yamashita A."/>
            <person name="Mikami Y."/>
            <person name="Hoshino Y."/>
            <person name="Kurita H."/>
            <person name="Hotta K."/>
            <person name="Shiba T."/>
            <person name="Hattori M."/>
        </authorList>
    </citation>
    <scope>NUCLEOTIDE SEQUENCE [LARGE SCALE GENOMIC DNA]</scope>
    <source>
        <strain>IFM 10152</strain>
    </source>
</reference>
<accession>Q5Z1P0</accession>
<proteinExistence type="inferred from homology"/>
<gene>
    <name evidence="1" type="primary">dtd</name>
    <name type="ordered locus">NFA_8060</name>
</gene>
<protein>
    <recommendedName>
        <fullName evidence="1">D-aminoacyl-tRNA deacylase</fullName>
        <shortName evidence="1">DTD</shortName>
        <ecNumber evidence="1">3.1.1.96</ecNumber>
    </recommendedName>
    <alternativeName>
        <fullName evidence="1">Gly-tRNA(Ala) deacylase</fullName>
    </alternativeName>
</protein>
<organism>
    <name type="scientific">Nocardia farcinica (strain IFM 10152)</name>
    <dbReference type="NCBI Taxonomy" id="247156"/>
    <lineage>
        <taxon>Bacteria</taxon>
        <taxon>Bacillati</taxon>
        <taxon>Actinomycetota</taxon>
        <taxon>Actinomycetes</taxon>
        <taxon>Mycobacteriales</taxon>
        <taxon>Nocardiaceae</taxon>
        <taxon>Nocardia</taxon>
    </lineage>
</organism>
<evidence type="ECO:0000255" key="1">
    <source>
        <dbReference type="HAMAP-Rule" id="MF_00518"/>
    </source>
</evidence>